<name>Y3407_BACVZ</name>
<proteinExistence type="inferred from homology"/>
<dbReference type="EMBL" id="CP000560">
    <property type="protein sequence ID" value="ABS75736.1"/>
    <property type="molecule type" value="Genomic_DNA"/>
</dbReference>
<dbReference type="RefSeq" id="WP_007407598.1">
    <property type="nucleotide sequence ID" value="NC_009725.2"/>
</dbReference>
<dbReference type="SMR" id="A7Z9R0"/>
<dbReference type="GeneID" id="93082551"/>
<dbReference type="KEGG" id="bay:RBAM_034070"/>
<dbReference type="HOGENOM" id="CLU_106658_0_0_9"/>
<dbReference type="Proteomes" id="UP000001120">
    <property type="component" value="Chromosome"/>
</dbReference>
<dbReference type="Gene3D" id="3.40.50.10360">
    <property type="entry name" value="Hypothetical protein TT1679"/>
    <property type="match status" value="1"/>
</dbReference>
<dbReference type="HAMAP" id="MF_00800">
    <property type="entry name" value="UPF0340"/>
    <property type="match status" value="1"/>
</dbReference>
<dbReference type="InterPro" id="IPR028345">
    <property type="entry name" value="Antibiotic_NAT-like"/>
</dbReference>
<dbReference type="InterPro" id="IPR006340">
    <property type="entry name" value="DUF436"/>
</dbReference>
<dbReference type="NCBIfam" id="TIGR01440">
    <property type="entry name" value="TIGR01440 family protein"/>
    <property type="match status" value="1"/>
</dbReference>
<dbReference type="Pfam" id="PF04260">
    <property type="entry name" value="DUF436"/>
    <property type="match status" value="1"/>
</dbReference>
<dbReference type="PIRSF" id="PIRSF007510">
    <property type="entry name" value="UCP007510"/>
    <property type="match status" value="1"/>
</dbReference>
<dbReference type="SUPFAM" id="SSF110710">
    <property type="entry name" value="TTHA0583/YokD-like"/>
    <property type="match status" value="1"/>
</dbReference>
<organism>
    <name type="scientific">Bacillus velezensis (strain DSM 23117 / BGSC 10A6 / LMG 26770 / FZB42)</name>
    <name type="common">Bacillus amyloliquefaciens subsp. plantarum</name>
    <dbReference type="NCBI Taxonomy" id="326423"/>
    <lineage>
        <taxon>Bacteria</taxon>
        <taxon>Bacillati</taxon>
        <taxon>Bacillota</taxon>
        <taxon>Bacilli</taxon>
        <taxon>Bacillales</taxon>
        <taxon>Bacillaceae</taxon>
        <taxon>Bacillus</taxon>
        <taxon>Bacillus amyloliquefaciens group</taxon>
    </lineage>
</organism>
<accession>A7Z9R0</accession>
<gene>
    <name type="ordered locus">RBAM_034070</name>
</gene>
<reference key="1">
    <citation type="journal article" date="2007" name="Nat. Biotechnol.">
        <title>Comparative analysis of the complete genome sequence of the plant growth-promoting bacterium Bacillus amyloliquefaciens FZB42.</title>
        <authorList>
            <person name="Chen X.H."/>
            <person name="Koumoutsi A."/>
            <person name="Scholz R."/>
            <person name="Eisenreich A."/>
            <person name="Schneider K."/>
            <person name="Heinemeyer I."/>
            <person name="Morgenstern B."/>
            <person name="Voss B."/>
            <person name="Hess W.R."/>
            <person name="Reva O."/>
            <person name="Junge H."/>
            <person name="Voigt B."/>
            <person name="Jungblut P.R."/>
            <person name="Vater J."/>
            <person name="Suessmuth R."/>
            <person name="Liesegang H."/>
            <person name="Strittmatter A."/>
            <person name="Gottschalk G."/>
            <person name="Borriss R."/>
        </authorList>
    </citation>
    <scope>NUCLEOTIDE SEQUENCE [LARGE SCALE GENOMIC DNA]</scope>
    <source>
        <strain>DSM 23117 / BGSC 10A6 / LMG 26770 / FZB42</strain>
    </source>
</reference>
<comment type="similarity">
    <text evidence="1">Belongs to the UPF0340 family.</text>
</comment>
<evidence type="ECO:0000255" key="1">
    <source>
        <dbReference type="HAMAP-Rule" id="MF_00800"/>
    </source>
</evidence>
<protein>
    <recommendedName>
        <fullName evidence="1">UPF0340 protein RBAM_034070</fullName>
    </recommendedName>
</protein>
<sequence>MEEMKQKWTDMLTEFQEQAGLTDGSLLVIGCSTSEAAGSRIGTAGSGDWAELIYGGLNRFKEKTGVHLAFQCCEHLNRALVIEAETAERFRLPIVSAVPVPKAGGAMASYAYRQMRSPVLAESIQADAGIDIGDTFIGMHLKPVAVPVRISSRELGEAHVTMARTRPKLIGGIRAVYECE</sequence>
<feature type="chain" id="PRO_1000083689" description="UPF0340 protein RBAM_034070">
    <location>
        <begin position="1"/>
        <end position="180"/>
    </location>
</feature>